<proteinExistence type="inferred from homology"/>
<dbReference type="EMBL" id="AL591976">
    <property type="protein sequence ID" value="CAC98877.1"/>
    <property type="molecule type" value="Genomic_DNA"/>
</dbReference>
<dbReference type="PIR" id="AG1174">
    <property type="entry name" value="AG1174"/>
</dbReference>
<dbReference type="RefSeq" id="NP_464326.1">
    <property type="nucleotide sequence ID" value="NC_003210.1"/>
</dbReference>
<dbReference type="RefSeq" id="WP_003723977.1">
    <property type="nucleotide sequence ID" value="NZ_CP149495.1"/>
</dbReference>
<dbReference type="SMR" id="P58724"/>
<dbReference type="STRING" id="169963.gene:17593450"/>
<dbReference type="PaxDb" id="169963-lmo0799"/>
<dbReference type="DNASU" id="985420"/>
<dbReference type="EnsemblBacteria" id="CAC98877">
    <property type="protein sequence ID" value="CAC98877"/>
    <property type="gene ID" value="CAC98877"/>
</dbReference>
<dbReference type="GeneID" id="985420"/>
<dbReference type="KEGG" id="lmo:lmo0799"/>
<dbReference type="PATRIC" id="fig|169963.11.peg.822"/>
<dbReference type="eggNOG" id="COG1366">
    <property type="taxonomic scope" value="Bacteria"/>
</dbReference>
<dbReference type="HOGENOM" id="CLU_080905_0_0_9"/>
<dbReference type="OrthoDB" id="9812260at2"/>
<dbReference type="PhylomeDB" id="P58724"/>
<dbReference type="BioCyc" id="LMON169963:LMO0799-MONOMER"/>
<dbReference type="Proteomes" id="UP000000817">
    <property type="component" value="Chromosome"/>
</dbReference>
<dbReference type="GO" id="GO:0009881">
    <property type="term" value="F:photoreceptor activity"/>
    <property type="evidence" value="ECO:0007669"/>
    <property type="project" value="UniProtKB-KW"/>
</dbReference>
<dbReference type="CDD" id="cd00130">
    <property type="entry name" value="PAS"/>
    <property type="match status" value="1"/>
</dbReference>
<dbReference type="CDD" id="cd07041">
    <property type="entry name" value="STAS_RsbR_RsbS_like"/>
    <property type="match status" value="1"/>
</dbReference>
<dbReference type="Gene3D" id="3.30.450.20">
    <property type="entry name" value="PAS domain"/>
    <property type="match status" value="1"/>
</dbReference>
<dbReference type="Gene3D" id="3.30.750.24">
    <property type="entry name" value="STAS domain"/>
    <property type="match status" value="1"/>
</dbReference>
<dbReference type="InterPro" id="IPR051932">
    <property type="entry name" value="Bact_StressResp_Reg"/>
</dbReference>
<dbReference type="InterPro" id="IPR001610">
    <property type="entry name" value="PAC"/>
</dbReference>
<dbReference type="InterPro" id="IPR000014">
    <property type="entry name" value="PAS"/>
</dbReference>
<dbReference type="InterPro" id="IPR000700">
    <property type="entry name" value="PAS-assoc_C"/>
</dbReference>
<dbReference type="InterPro" id="IPR035965">
    <property type="entry name" value="PAS-like_dom_sf"/>
</dbReference>
<dbReference type="InterPro" id="IPR002645">
    <property type="entry name" value="STAS_dom"/>
</dbReference>
<dbReference type="InterPro" id="IPR036513">
    <property type="entry name" value="STAS_dom_sf"/>
</dbReference>
<dbReference type="NCBIfam" id="TIGR00229">
    <property type="entry name" value="sensory_box"/>
    <property type="match status" value="1"/>
</dbReference>
<dbReference type="PANTHER" id="PTHR33745:SF8">
    <property type="entry name" value="BLUE-LIGHT PHOTORECEPTOR"/>
    <property type="match status" value="1"/>
</dbReference>
<dbReference type="PANTHER" id="PTHR33745">
    <property type="entry name" value="RSBT ANTAGONIST PROTEIN RSBS-RELATED"/>
    <property type="match status" value="1"/>
</dbReference>
<dbReference type="Pfam" id="PF13426">
    <property type="entry name" value="PAS_9"/>
    <property type="match status" value="1"/>
</dbReference>
<dbReference type="Pfam" id="PF01740">
    <property type="entry name" value="STAS"/>
    <property type="match status" value="1"/>
</dbReference>
<dbReference type="SMART" id="SM00086">
    <property type="entry name" value="PAC"/>
    <property type="match status" value="1"/>
</dbReference>
<dbReference type="SUPFAM" id="SSF55785">
    <property type="entry name" value="PYP-like sensor domain (PAS domain)"/>
    <property type="match status" value="1"/>
</dbReference>
<dbReference type="SUPFAM" id="SSF52091">
    <property type="entry name" value="SpoIIaa-like"/>
    <property type="match status" value="1"/>
</dbReference>
<dbReference type="PROSITE" id="PS50113">
    <property type="entry name" value="PAC"/>
    <property type="match status" value="1"/>
</dbReference>
<dbReference type="PROSITE" id="PS50112">
    <property type="entry name" value="PAS"/>
    <property type="match status" value="1"/>
</dbReference>
<dbReference type="PROSITE" id="PS50801">
    <property type="entry name" value="STAS"/>
    <property type="match status" value="1"/>
</dbReference>
<protein>
    <recommendedName>
        <fullName>Blue-light photoreceptor</fullName>
    </recommendedName>
    <alternativeName>
        <fullName>Phototropin homolog</fullName>
    </alternativeName>
</protein>
<accession>P58724</accession>
<sequence>MTAYPQFDVILKALNLSSVGVIITDPEQKDNPIIFVNTGFENITGYAKEEALGSNCHFLQGDDTDKEEVAKIRHAINEKSTANVLLKNYRKDGTSFMNELTIEPIYDDHEHLYFVGIQKDVTTEHDYQLELEKSLTEIEKLSTPIVPIKENICVLPLIGSLTHDRFQHMSEYVSEYMDHGKEDYLIMDLSGLAEFNEDAVMNLVKFHGFMKLTGVELIITGISPKFAMTLIRYEENLASLTTYSTIKEALQFY</sequence>
<name>PHOT_LISMO</name>
<organism>
    <name type="scientific">Listeria monocytogenes serovar 1/2a (strain ATCC BAA-679 / EGD-e)</name>
    <dbReference type="NCBI Taxonomy" id="169963"/>
    <lineage>
        <taxon>Bacteria</taxon>
        <taxon>Bacillati</taxon>
        <taxon>Bacillota</taxon>
        <taxon>Bacilli</taxon>
        <taxon>Bacillales</taxon>
        <taxon>Listeriaceae</taxon>
        <taxon>Listeria</taxon>
    </lineage>
</organism>
<evidence type="ECO:0000250" key="1"/>
<evidence type="ECO:0000255" key="2">
    <source>
        <dbReference type="PROSITE-ProRule" id="PRU00140"/>
    </source>
</evidence>
<evidence type="ECO:0000255" key="3">
    <source>
        <dbReference type="PROSITE-ProRule" id="PRU00141"/>
    </source>
</evidence>
<evidence type="ECO:0000255" key="4">
    <source>
        <dbReference type="PROSITE-ProRule" id="PRU00198"/>
    </source>
</evidence>
<feature type="chain" id="PRO_0000172006" description="Blue-light photoreceptor">
    <location>
        <begin position="1"/>
        <end position="253"/>
    </location>
</feature>
<feature type="domain" description="PAS" evidence="2">
    <location>
        <begin position="6"/>
        <end position="79"/>
    </location>
</feature>
<feature type="domain" description="PAC" evidence="3">
    <location>
        <begin position="80"/>
        <end position="133"/>
    </location>
</feature>
<feature type="domain" description="STAS" evidence="4">
    <location>
        <begin position="142"/>
        <end position="253"/>
    </location>
</feature>
<feature type="modified residue" description="S-4a-FMN cysteine" evidence="1">
    <location>
        <position position="56"/>
    </location>
</feature>
<reference key="1">
    <citation type="journal article" date="2001" name="Science">
        <title>Comparative genomics of Listeria species.</title>
        <authorList>
            <person name="Glaser P."/>
            <person name="Frangeul L."/>
            <person name="Buchrieser C."/>
            <person name="Rusniok C."/>
            <person name="Amend A."/>
            <person name="Baquero F."/>
            <person name="Berche P."/>
            <person name="Bloecker H."/>
            <person name="Brandt P."/>
            <person name="Chakraborty T."/>
            <person name="Charbit A."/>
            <person name="Chetouani F."/>
            <person name="Couve E."/>
            <person name="de Daruvar A."/>
            <person name="Dehoux P."/>
            <person name="Domann E."/>
            <person name="Dominguez-Bernal G."/>
            <person name="Duchaud E."/>
            <person name="Durant L."/>
            <person name="Dussurget O."/>
            <person name="Entian K.-D."/>
            <person name="Fsihi H."/>
            <person name="Garcia-del Portillo F."/>
            <person name="Garrido P."/>
            <person name="Gautier L."/>
            <person name="Goebel W."/>
            <person name="Gomez-Lopez N."/>
            <person name="Hain T."/>
            <person name="Hauf J."/>
            <person name="Jackson D."/>
            <person name="Jones L.-M."/>
            <person name="Kaerst U."/>
            <person name="Kreft J."/>
            <person name="Kuhn M."/>
            <person name="Kunst F."/>
            <person name="Kurapkat G."/>
            <person name="Madueno E."/>
            <person name="Maitournam A."/>
            <person name="Mata Vicente J."/>
            <person name="Ng E."/>
            <person name="Nedjari H."/>
            <person name="Nordsiek G."/>
            <person name="Novella S."/>
            <person name="de Pablos B."/>
            <person name="Perez-Diaz J.-C."/>
            <person name="Purcell R."/>
            <person name="Remmel B."/>
            <person name="Rose M."/>
            <person name="Schlueter T."/>
            <person name="Simoes N."/>
            <person name="Tierrez A."/>
            <person name="Vazquez-Boland J.-A."/>
            <person name="Voss H."/>
            <person name="Wehland J."/>
            <person name="Cossart P."/>
        </authorList>
    </citation>
    <scope>NUCLEOTIDE SEQUENCE [LARGE SCALE GENOMIC DNA]</scope>
    <source>
        <strain>ATCC BAA-679 / EGD-e</strain>
    </source>
</reference>
<keyword id="KW-0157">Chromophore</keyword>
<keyword id="KW-0285">Flavoprotein</keyword>
<keyword id="KW-0288">FMN</keyword>
<keyword id="KW-0600">Photoreceptor protein</keyword>
<keyword id="KW-0675">Receptor</keyword>
<keyword id="KW-1185">Reference proteome</keyword>
<keyword id="KW-0716">Sensory transduction</keyword>
<keyword id="KW-0804">Transcription</keyword>
<keyword id="KW-0805">Transcription regulation</keyword>
<comment type="function">
    <text evidence="1">Exhibits the same spectroscopical features and blue-light induced photochemistry as plants phototropins, with the reversible formation of a blue-shifted photoproduct, assigned to an FMN-cysteine thiol adduct. Positive regulator in the activation of the general stress transcription factor sigma-B (By similarity).</text>
</comment>
<comment type="PTM">
    <text evidence="1">FMN binds covalently to cysteine after exposure to blue light and this bond is spontaneously broken in the dark.</text>
</comment>
<gene>
    <name type="ordered locus">lmo0799</name>
</gene>